<comment type="function">
    <text evidence="2 3">Tryptophan dimethylallyltransferase; part of the gene cluster that mediates the biosynthesis of isofumigaclavines, fungal ergot alkaloids (PubMed:28620689). The tryptophan dimethylallyltransferase ifgA catalyzes the first step of ergot alkaloid biosynthesis by condensing dimethylallyl diphosphate (DMAP) and tryptophan to form 4-dimethylallyl-L-tryptophan (PubMed:28620689). The second step is catalyzed by the methyltransferase ifgB that methylates 4-dimethylallyl-L-tryptophan in the presence of S-adenosyl-L-methionine, resulting in the formation of N-methyl-dimethylallyl-L-tryptophan (PubMed:28620689). The catalase ifgD and the FAD-dependent oxidoreductase ifgC then transform N-methyl-dimethylallyl-L-tryptophan to chanoclavine-I which is further oxidized by ifgE in the presence of NAD(+), resulting in the formation of chanoclavine-I aldehyde (PubMed:28902217). The chanoclavine-I aldehyde reductases ifgG and/or fgaOx3 reduce chanoclavine-I aldehyde to dihydrochanoclavine-I aldehyde that spontaneously dehydrates to form 6,8-dimethyl-6,7-didehydroergoline (PubMed:28620689, PubMed:28902217). The festuclavine dehydrogenases ifgF1 and/or ifgF2 then catalyze the reduction of 6,8-dimethyl-6,7-didehydroergoline to form festuclavine (PubMed:28620689). Hydrolysis of festuclavine by a yet undetermined cytochrome P450 monooxygenase (called ifgH) then leads to the formation of isofumigaclavine B which is in turn acetylated by ifgI to isofumigaclavine A (PubMed:28620689). Penicillium roqueforti has interestingly at least two sets of genes for the consumption of chanoclavine-I aldehyde on three different loci, the OYEs ifgG/fgaOx3 and the festuclavine synthase homologs ifgF1/ifgF2 (PubMed:28620689, PubMed:28902217). The reason for the duplication of these genes is unclear, probably to ensure the conversion of chanoclavine-I aldehyde by differential gene expression under various environmental conditions (PubMed:28902217).</text>
</comment>
<comment type="catalytic activity">
    <reaction evidence="1">
        <text>L-tryptophan + dimethylallyl diphosphate = 4-(3-methylbut-2-enyl)-L-tryptophan + diphosphate</text>
        <dbReference type="Rhea" id="RHEA:14173"/>
        <dbReference type="ChEBI" id="CHEBI:33019"/>
        <dbReference type="ChEBI" id="CHEBI:57623"/>
        <dbReference type="ChEBI" id="CHEBI:57912"/>
        <dbReference type="ChEBI" id="CHEBI:58209"/>
        <dbReference type="EC" id="2.5.1.34"/>
    </reaction>
</comment>
<comment type="pathway">
    <text evidence="2">Alkaloid biosynthesis; ergot alkaloid biosynthesis.</text>
</comment>
<comment type="subunit">
    <text evidence="1">Homodimer.</text>
</comment>
<comment type="disruption phenotype">
    <text evidence="2">Does not affect the production of roquefortine C but impairs the production of isofumigaclavines A and B (PubMed:28620689).</text>
</comment>
<comment type="similarity">
    <text evidence="5">Belongs to the tryptophan dimethylallyltransferase family.</text>
</comment>
<dbReference type="EC" id="2.5.1.34" evidence="1"/>
<dbReference type="EMBL" id="HG792019">
    <property type="protein sequence ID" value="CDM36678.1"/>
    <property type="molecule type" value="Genomic_DNA"/>
</dbReference>
<dbReference type="SMR" id="W6QIM8"/>
<dbReference type="STRING" id="1365484.W6QIM8"/>
<dbReference type="OMA" id="EPQVYFT"/>
<dbReference type="OrthoDB" id="5392033at2759"/>
<dbReference type="UniPathway" id="UPA00327"/>
<dbReference type="Proteomes" id="UP000030686">
    <property type="component" value="Unassembled WGS sequence"/>
</dbReference>
<dbReference type="GO" id="GO:0050364">
    <property type="term" value="F:tryptophan dimethylallyltransferase activity"/>
    <property type="evidence" value="ECO:0007669"/>
    <property type="project" value="UniProtKB-EC"/>
</dbReference>
<dbReference type="GO" id="GO:0035835">
    <property type="term" value="P:indole alkaloid biosynthetic process"/>
    <property type="evidence" value="ECO:0007669"/>
    <property type="project" value="UniProtKB-UniPathway"/>
</dbReference>
<dbReference type="CDD" id="cd13929">
    <property type="entry name" value="PT-DMATS_CymD"/>
    <property type="match status" value="1"/>
</dbReference>
<dbReference type="InterPro" id="IPR033964">
    <property type="entry name" value="Aro_prenylTrfase"/>
</dbReference>
<dbReference type="InterPro" id="IPR017795">
    <property type="entry name" value="Aro_prenylTrfase_DMATS"/>
</dbReference>
<dbReference type="InterPro" id="IPR012148">
    <property type="entry name" value="DMATS-type_fun"/>
</dbReference>
<dbReference type="NCBIfam" id="TIGR03429">
    <property type="entry name" value="arom_pren_DMATS"/>
    <property type="match status" value="1"/>
</dbReference>
<dbReference type="PANTHER" id="PTHR40627">
    <property type="entry name" value="INDOLE PRENYLTRANSFERASE TDIB-RELATED"/>
    <property type="match status" value="1"/>
</dbReference>
<dbReference type="PANTHER" id="PTHR40627:SF3">
    <property type="entry name" value="PRENYLTRANSFERASE ASQH2-RELATED"/>
    <property type="match status" value="1"/>
</dbReference>
<dbReference type="Pfam" id="PF11991">
    <property type="entry name" value="Trp_DMAT"/>
    <property type="match status" value="1"/>
</dbReference>
<dbReference type="PIRSF" id="PIRSF000509">
    <property type="entry name" value="Trp_DMAT"/>
    <property type="match status" value="1"/>
</dbReference>
<dbReference type="SFLD" id="SFLDS00036">
    <property type="entry name" value="Aromatic_Prenyltransferase"/>
    <property type="match status" value="1"/>
</dbReference>
<dbReference type="SFLD" id="SFLDG01162">
    <property type="entry name" value="I"/>
    <property type="match status" value="1"/>
</dbReference>
<sequence>MGSIEPPNASSCLVYQTITEFADFPDHDQKLWWHSTAPMFAEMLKVAGYDIHSRYKALGLYQKFIIPFLGVYPTKTNDRWLSILTRYGTPFELSLNCTHSVVRYTFEPINAATGSLKDPFNTHAIWDALDTLIPLQKGIDLEFFAHLKRDLTVNDQDTAYLLEKKKVGGQIRTQNKLALDLKGGEFVLKAYIYPALKSLATGKPVQELMFDSVHRLSHQYPTLAAPLRKLEEYVHSRGTSSTASPRLISCDLCDPRQSRIKIYLLELNVSLESMEDLWTLGGRRNDTQTLAGLEMIRELWDLINLPTGILSYPEPYLKLGEVPNEQLPLMANYTLHHDDPMPEPQVYFTTFGMNDGRVTDGLATFFRRHGYTHMLQTYRDSLRAYYPHVDHDTVNYLHAYISFSYRKGSPYLSVYLQSFETGDWPISSFGAPILEPVSKKMCRGHPVSFEVPLTKQQVVASE</sequence>
<organism>
    <name type="scientific">Penicillium roqueforti (strain FM164)</name>
    <dbReference type="NCBI Taxonomy" id="1365484"/>
    <lineage>
        <taxon>Eukaryota</taxon>
        <taxon>Fungi</taxon>
        <taxon>Dikarya</taxon>
        <taxon>Ascomycota</taxon>
        <taxon>Pezizomycotina</taxon>
        <taxon>Eurotiomycetes</taxon>
        <taxon>Eurotiomycetidae</taxon>
        <taxon>Eurotiales</taxon>
        <taxon>Aspergillaceae</taxon>
        <taxon>Penicillium</taxon>
    </lineage>
</organism>
<reference key="1">
    <citation type="journal article" date="2014" name="Nat. Commun.">
        <title>Multiple recent horizontal transfers of a large genomic region in cheese making fungi.</title>
        <authorList>
            <person name="Cheeseman K."/>
            <person name="Ropars J."/>
            <person name="Renault P."/>
            <person name="Dupont J."/>
            <person name="Gouzy J."/>
            <person name="Branca A."/>
            <person name="Abraham A.-L."/>
            <person name="Ceppi M."/>
            <person name="Conseiller E."/>
            <person name="Debuchy R."/>
            <person name="Malagnac F."/>
            <person name="Goarin A."/>
            <person name="Silar P."/>
            <person name="Lacoste S."/>
            <person name="Sallet E."/>
            <person name="Bensimon A."/>
            <person name="Giraud T."/>
            <person name="Brygoo Y."/>
        </authorList>
    </citation>
    <scope>NUCLEOTIDE SEQUENCE [LARGE SCALE GENOMIC DNA]</scope>
    <source>
        <strain>FM164</strain>
    </source>
</reference>
<reference key="2">
    <citation type="journal article" date="2017" name="Appl. Microbiol. Biotechnol.">
        <title>Silencing of a second dimethylallyltryptophan synthase of Penicillium roqueforti reveals a novel clavine alkaloid gene cluster.</title>
        <authorList>
            <person name="Fernandez-Bodega A."/>
            <person name="Alvarez-Alvarez R."/>
            <person name="Liras P."/>
            <person name="Martin J.F."/>
        </authorList>
    </citation>
    <scope>FUNCTION</scope>
    <scope>DISRUPTION PHENOTYPE</scope>
    <scope>PATHWAY</scope>
</reference>
<reference key="3">
    <citation type="journal article" date="2017" name="Org. Biomol. Chem.">
        <title>A bifunctional old yellow enzyme from Penicillium roqueforti is involved in ergot alkaloid biosynthesis.</title>
        <authorList>
            <person name="Gerhards N."/>
            <person name="Li S.M."/>
        </authorList>
    </citation>
    <scope>FUNCTION</scope>
</reference>
<keyword id="KW-0017">Alkaloid metabolism</keyword>
<keyword id="KW-1185">Reference proteome</keyword>
<keyword id="KW-0808">Transferase</keyword>
<protein>
    <recommendedName>
        <fullName evidence="4">Tryptophan dimethylallyltransferase ifgA</fullName>
        <ecNumber evidence="1">2.5.1.34</ecNumber>
    </recommendedName>
    <alternativeName>
        <fullName evidence="4">4-dimethylallyltryptophan synthase</fullName>
        <shortName evidence="4">DMATS</shortName>
    </alternativeName>
    <alternativeName>
        <fullName evidence="5">All-trans-hexaprenyl-diphosphate synthase</fullName>
    </alternativeName>
    <alternativeName>
        <fullName evidence="4">Isofumigaclavine biosynthesis cluster A protein A</fullName>
    </alternativeName>
    <alternativeName>
        <fullName evidence="5">L-tryptophan dimethylallyl transferase</fullName>
    </alternativeName>
</protein>
<accession>W6QIM8</accession>
<proteinExistence type="inferred from homology"/>
<gene>
    <name evidence="4" type="primary">ifgA</name>
    <name type="ORF">PROQFM164_S05g000511</name>
</gene>
<name>IFGA_PENRF</name>
<feature type="chain" id="PRO_0000444536" description="Tryptophan dimethylallyltransferase ifgA">
    <location>
        <begin position="1"/>
        <end position="462"/>
    </location>
</feature>
<feature type="binding site" evidence="1">
    <location>
        <begin position="83"/>
        <end position="84"/>
    </location>
    <ligand>
        <name>L-tryptophan</name>
        <dbReference type="ChEBI" id="CHEBI:57912"/>
    </ligand>
</feature>
<feature type="binding site" evidence="1">
    <location>
        <position position="92"/>
    </location>
    <ligand>
        <name>L-tryptophan</name>
        <dbReference type="ChEBI" id="CHEBI:57912"/>
    </ligand>
</feature>
<feature type="binding site" evidence="1">
    <location>
        <position position="103"/>
    </location>
    <ligand>
        <name>substrate</name>
    </ligand>
</feature>
<feature type="binding site" evidence="1">
    <location>
        <position position="189"/>
    </location>
    <ligand>
        <name>substrate</name>
    </ligand>
</feature>
<feature type="binding site" evidence="1">
    <location>
        <position position="191"/>
    </location>
    <ligand>
        <name>substrate</name>
    </ligand>
</feature>
<feature type="binding site" evidence="1">
    <location>
        <position position="193"/>
    </location>
    <ligand>
        <name>L-tryptophan</name>
        <dbReference type="ChEBI" id="CHEBI:57912"/>
    </ligand>
</feature>
<feature type="binding site" evidence="1">
    <location>
        <position position="246"/>
    </location>
    <ligand>
        <name>L-tryptophan</name>
        <dbReference type="ChEBI" id="CHEBI:57912"/>
    </ligand>
</feature>
<feature type="binding site" evidence="1">
    <location>
        <position position="259"/>
    </location>
    <ligand>
        <name>substrate</name>
    </ligand>
</feature>
<feature type="binding site" evidence="1">
    <location>
        <position position="261"/>
    </location>
    <ligand>
        <name>substrate</name>
    </ligand>
</feature>
<feature type="binding site" evidence="1">
    <location>
        <position position="263"/>
    </location>
    <ligand>
        <name>substrate</name>
    </ligand>
</feature>
<feature type="binding site" evidence="1">
    <location>
        <position position="345"/>
    </location>
    <ligand>
        <name>substrate</name>
    </ligand>
</feature>
<feature type="binding site" evidence="1">
    <location>
        <position position="347"/>
    </location>
    <ligand>
        <name>substrate</name>
    </ligand>
</feature>
<evidence type="ECO:0000250" key="1">
    <source>
        <dbReference type="UniProtKB" id="Q50EL0"/>
    </source>
</evidence>
<evidence type="ECO:0000269" key="2">
    <source>
    </source>
</evidence>
<evidence type="ECO:0000269" key="3">
    <source>
    </source>
</evidence>
<evidence type="ECO:0000303" key="4">
    <source>
    </source>
</evidence>
<evidence type="ECO:0000305" key="5"/>